<sequence>MAGQKIRIRLKSYDHEVIDQSAKKIVETVTNAGATVVGPVPLPTEKNVFCVIRSPHKYKDSREHFEMRTHKRLIDIVDPTPKAVDSLMHIDLPADVNIEIKL</sequence>
<keyword id="KW-0687">Ribonucleoprotein</keyword>
<keyword id="KW-0689">Ribosomal protein</keyword>
<proteinExistence type="inferred from homology"/>
<evidence type="ECO:0000255" key="1">
    <source>
        <dbReference type="HAMAP-Rule" id="MF_00508"/>
    </source>
</evidence>
<evidence type="ECO:0000305" key="2"/>
<gene>
    <name evidence="1" type="primary">rpsJ</name>
    <name type="ordered locus">BLD_1706</name>
</gene>
<comment type="function">
    <text evidence="1">Involved in the binding of tRNA to the ribosomes.</text>
</comment>
<comment type="subunit">
    <text evidence="1">Part of the 30S ribosomal subunit.</text>
</comment>
<comment type="similarity">
    <text evidence="1">Belongs to the universal ribosomal protein uS10 family.</text>
</comment>
<name>RS10_BIFLD</name>
<accession>B3DQ12</accession>
<protein>
    <recommendedName>
        <fullName evidence="1">Small ribosomal subunit protein uS10</fullName>
    </recommendedName>
    <alternativeName>
        <fullName evidence="2">30S ribosomal protein S10</fullName>
    </alternativeName>
</protein>
<organism>
    <name type="scientific">Bifidobacterium longum (strain DJO10A)</name>
    <dbReference type="NCBI Taxonomy" id="205913"/>
    <lineage>
        <taxon>Bacteria</taxon>
        <taxon>Bacillati</taxon>
        <taxon>Actinomycetota</taxon>
        <taxon>Actinomycetes</taxon>
        <taxon>Bifidobacteriales</taxon>
        <taxon>Bifidobacteriaceae</taxon>
        <taxon>Bifidobacterium</taxon>
    </lineage>
</organism>
<feature type="chain" id="PRO_1000127082" description="Small ribosomal subunit protein uS10">
    <location>
        <begin position="1"/>
        <end position="102"/>
    </location>
</feature>
<reference key="1">
    <citation type="journal article" date="2008" name="BMC Genomics">
        <title>Comparative genomic analysis of the gut bacterium Bifidobacterium longum reveals loci susceptible to deletion during pure culture growth.</title>
        <authorList>
            <person name="Lee J.H."/>
            <person name="Karamychev V.N."/>
            <person name="Kozyavkin S.A."/>
            <person name="Mills D."/>
            <person name="Pavlov A.R."/>
            <person name="Pavlova N.V."/>
            <person name="Polouchine N.N."/>
            <person name="Richardson P.M."/>
            <person name="Shakhova V.V."/>
            <person name="Slesarev A.I."/>
            <person name="Weimer B."/>
            <person name="O'Sullivan D.J."/>
        </authorList>
    </citation>
    <scope>NUCLEOTIDE SEQUENCE [LARGE SCALE GENOMIC DNA]</scope>
    <source>
        <strain>DJO10A</strain>
    </source>
</reference>
<dbReference type="EMBL" id="CP000605">
    <property type="protein sequence ID" value="ACD99151.1"/>
    <property type="molecule type" value="Genomic_DNA"/>
</dbReference>
<dbReference type="RefSeq" id="WP_003827292.1">
    <property type="nucleotide sequence ID" value="NZ_AABM02000025.1"/>
</dbReference>
<dbReference type="SMR" id="B3DQ12"/>
<dbReference type="GeneID" id="98300221"/>
<dbReference type="KEGG" id="blj:BLD_1706"/>
<dbReference type="HOGENOM" id="CLU_122625_1_3_11"/>
<dbReference type="Proteomes" id="UP000002419">
    <property type="component" value="Chromosome"/>
</dbReference>
<dbReference type="GO" id="GO:1990904">
    <property type="term" value="C:ribonucleoprotein complex"/>
    <property type="evidence" value="ECO:0007669"/>
    <property type="project" value="UniProtKB-KW"/>
</dbReference>
<dbReference type="GO" id="GO:0005840">
    <property type="term" value="C:ribosome"/>
    <property type="evidence" value="ECO:0007669"/>
    <property type="project" value="UniProtKB-KW"/>
</dbReference>
<dbReference type="GO" id="GO:0003735">
    <property type="term" value="F:structural constituent of ribosome"/>
    <property type="evidence" value="ECO:0007669"/>
    <property type="project" value="InterPro"/>
</dbReference>
<dbReference type="GO" id="GO:0000049">
    <property type="term" value="F:tRNA binding"/>
    <property type="evidence" value="ECO:0007669"/>
    <property type="project" value="UniProtKB-UniRule"/>
</dbReference>
<dbReference type="GO" id="GO:0006412">
    <property type="term" value="P:translation"/>
    <property type="evidence" value="ECO:0007669"/>
    <property type="project" value="UniProtKB-UniRule"/>
</dbReference>
<dbReference type="FunFam" id="3.30.70.600:FF:000001">
    <property type="entry name" value="30S ribosomal protein S10"/>
    <property type="match status" value="1"/>
</dbReference>
<dbReference type="Gene3D" id="3.30.70.600">
    <property type="entry name" value="Ribosomal protein S10 domain"/>
    <property type="match status" value="1"/>
</dbReference>
<dbReference type="HAMAP" id="MF_00508">
    <property type="entry name" value="Ribosomal_uS10"/>
    <property type="match status" value="1"/>
</dbReference>
<dbReference type="InterPro" id="IPR001848">
    <property type="entry name" value="Ribosomal_uS10"/>
</dbReference>
<dbReference type="InterPro" id="IPR018268">
    <property type="entry name" value="Ribosomal_uS10_CS"/>
</dbReference>
<dbReference type="InterPro" id="IPR027486">
    <property type="entry name" value="Ribosomal_uS10_dom"/>
</dbReference>
<dbReference type="InterPro" id="IPR036838">
    <property type="entry name" value="Ribosomal_uS10_dom_sf"/>
</dbReference>
<dbReference type="NCBIfam" id="NF001861">
    <property type="entry name" value="PRK00596.1"/>
    <property type="match status" value="1"/>
</dbReference>
<dbReference type="NCBIfam" id="TIGR01049">
    <property type="entry name" value="rpsJ_bact"/>
    <property type="match status" value="1"/>
</dbReference>
<dbReference type="PANTHER" id="PTHR11700">
    <property type="entry name" value="30S RIBOSOMAL PROTEIN S10 FAMILY MEMBER"/>
    <property type="match status" value="1"/>
</dbReference>
<dbReference type="Pfam" id="PF00338">
    <property type="entry name" value="Ribosomal_S10"/>
    <property type="match status" value="1"/>
</dbReference>
<dbReference type="PRINTS" id="PR00971">
    <property type="entry name" value="RIBOSOMALS10"/>
</dbReference>
<dbReference type="SMART" id="SM01403">
    <property type="entry name" value="Ribosomal_S10"/>
    <property type="match status" value="1"/>
</dbReference>
<dbReference type="SUPFAM" id="SSF54999">
    <property type="entry name" value="Ribosomal protein S10"/>
    <property type="match status" value="1"/>
</dbReference>
<dbReference type="PROSITE" id="PS00361">
    <property type="entry name" value="RIBOSOMAL_S10"/>
    <property type="match status" value="1"/>
</dbReference>